<reference key="1">
    <citation type="journal article" date="2000" name="Nature">
        <title>Complete genome sequence of Pseudomonas aeruginosa PAO1, an opportunistic pathogen.</title>
        <authorList>
            <person name="Stover C.K."/>
            <person name="Pham X.-Q.T."/>
            <person name="Erwin A.L."/>
            <person name="Mizoguchi S.D."/>
            <person name="Warrener P."/>
            <person name="Hickey M.J."/>
            <person name="Brinkman F.S.L."/>
            <person name="Hufnagle W.O."/>
            <person name="Kowalik D.J."/>
            <person name="Lagrou M."/>
            <person name="Garber R.L."/>
            <person name="Goltry L."/>
            <person name="Tolentino E."/>
            <person name="Westbrock-Wadman S."/>
            <person name="Yuan Y."/>
            <person name="Brody L.L."/>
            <person name="Coulter S.N."/>
            <person name="Folger K.R."/>
            <person name="Kas A."/>
            <person name="Larbig K."/>
            <person name="Lim R.M."/>
            <person name="Smith K.A."/>
            <person name="Spencer D.H."/>
            <person name="Wong G.K.-S."/>
            <person name="Wu Z."/>
            <person name="Paulsen I.T."/>
            <person name="Reizer J."/>
            <person name="Saier M.H. Jr."/>
            <person name="Hancock R.E.W."/>
            <person name="Lory S."/>
            <person name="Olson M.V."/>
        </authorList>
    </citation>
    <scope>NUCLEOTIDE SEQUENCE [LARGE SCALE GENOMIC DNA]</scope>
    <source>
        <strain>ATCC 15692 / DSM 22644 / CIP 104116 / JCM 14847 / LMG 12228 / 1C / PRS 101 / PAO1</strain>
    </source>
</reference>
<protein>
    <recommendedName>
        <fullName evidence="1">Glutaminase</fullName>
        <ecNumber evidence="1">3.5.1.2</ecNumber>
    </recommendedName>
</protein>
<feature type="chain" id="PRO_0000110616" description="Glutaminase">
    <location>
        <begin position="1"/>
        <end position="302"/>
    </location>
</feature>
<feature type="binding site" evidence="1">
    <location>
        <position position="61"/>
    </location>
    <ligand>
        <name>substrate</name>
    </ligand>
</feature>
<feature type="binding site" evidence="1">
    <location>
        <position position="111"/>
    </location>
    <ligand>
        <name>substrate</name>
    </ligand>
</feature>
<feature type="binding site" evidence="1">
    <location>
        <position position="155"/>
    </location>
    <ligand>
        <name>substrate</name>
    </ligand>
</feature>
<feature type="binding site" evidence="1">
    <location>
        <position position="162"/>
    </location>
    <ligand>
        <name>substrate</name>
    </ligand>
</feature>
<feature type="binding site" evidence="1">
    <location>
        <position position="186"/>
    </location>
    <ligand>
        <name>substrate</name>
    </ligand>
</feature>
<feature type="binding site" evidence="1">
    <location>
        <position position="238"/>
    </location>
    <ligand>
        <name>substrate</name>
    </ligand>
</feature>
<feature type="binding site" evidence="1">
    <location>
        <position position="256"/>
    </location>
    <ligand>
        <name>substrate</name>
    </ligand>
</feature>
<organism>
    <name type="scientific">Pseudomonas aeruginosa (strain ATCC 15692 / DSM 22644 / CIP 104116 / JCM 14847 / LMG 12228 / 1C / PRS 101 / PAO1)</name>
    <dbReference type="NCBI Taxonomy" id="208964"/>
    <lineage>
        <taxon>Bacteria</taxon>
        <taxon>Pseudomonadati</taxon>
        <taxon>Pseudomonadota</taxon>
        <taxon>Gammaproteobacteria</taxon>
        <taxon>Pseudomonadales</taxon>
        <taxon>Pseudomonadaceae</taxon>
        <taxon>Pseudomonas</taxon>
    </lineage>
</organism>
<keyword id="KW-0378">Hydrolase</keyword>
<keyword id="KW-1185">Reference proteome</keyword>
<proteinExistence type="inferred from homology"/>
<sequence length="302" mass="33046">MQQLLNEILDEVRPLIGRGKVADYIPALAGVEPNQLGIAVYSRDGELFHAGDALRPFSIQSISKVFSLVQAIQHSGEDIWQRLGHEPSGQPFNSLVQLEFERGKPRNPFINAGALVICDINQSRFAAPAQSMRDFVRRLCGNPEVVSDSVVARSEYQHRSRNAAAAYLMKSFGNFHNDVEAVLFSYFHHCALRMSCVDLARAFCFLADKGFCKHSGEQVLNERQTKQVNAIMATSGLYDEAGNFAYRVGLPGKSGVGGGIIAVVPGRFTVCVWSPELNAAGNSLAGIAALEKLSERIGWSIF</sequence>
<comment type="catalytic activity">
    <reaction evidence="1">
        <text>L-glutamine + H2O = L-glutamate + NH4(+)</text>
        <dbReference type="Rhea" id="RHEA:15889"/>
        <dbReference type="ChEBI" id="CHEBI:15377"/>
        <dbReference type="ChEBI" id="CHEBI:28938"/>
        <dbReference type="ChEBI" id="CHEBI:29985"/>
        <dbReference type="ChEBI" id="CHEBI:58359"/>
        <dbReference type="EC" id="3.5.1.2"/>
    </reaction>
</comment>
<comment type="subunit">
    <text evidence="1">Homotetramer.</text>
</comment>
<comment type="similarity">
    <text evidence="1">Belongs to the glutaminase family.</text>
</comment>
<accession>Q9I387</accession>
<gene>
    <name evidence="1" type="primary">glsA</name>
    <name type="ordered locus">PA1638</name>
</gene>
<evidence type="ECO:0000255" key="1">
    <source>
        <dbReference type="HAMAP-Rule" id="MF_00313"/>
    </source>
</evidence>
<name>GLSA_PSEAE</name>
<dbReference type="EC" id="3.5.1.2" evidence="1"/>
<dbReference type="EMBL" id="AE004091">
    <property type="protein sequence ID" value="AAG05027.1"/>
    <property type="molecule type" value="Genomic_DNA"/>
</dbReference>
<dbReference type="PIR" id="E83441">
    <property type="entry name" value="E83441"/>
</dbReference>
<dbReference type="RefSeq" id="NP_250329.1">
    <property type="nucleotide sequence ID" value="NC_002516.2"/>
</dbReference>
<dbReference type="SMR" id="Q9I387"/>
<dbReference type="FunCoup" id="Q9I387">
    <property type="interactions" value="208"/>
</dbReference>
<dbReference type="STRING" id="208964.PA1638"/>
<dbReference type="PaxDb" id="208964-PA1638"/>
<dbReference type="GeneID" id="883013"/>
<dbReference type="KEGG" id="pae:PA1638"/>
<dbReference type="PATRIC" id="fig|208964.12.peg.1698"/>
<dbReference type="PseudoCAP" id="PA1638"/>
<dbReference type="HOGENOM" id="CLU_027932_1_1_6"/>
<dbReference type="InParanoid" id="Q9I387"/>
<dbReference type="OrthoDB" id="9788822at2"/>
<dbReference type="PhylomeDB" id="Q9I387"/>
<dbReference type="BioCyc" id="PAER208964:G1FZ6-1668-MONOMER"/>
<dbReference type="BRENDA" id="3.5.1.2">
    <property type="organism ID" value="5087"/>
</dbReference>
<dbReference type="Proteomes" id="UP000002438">
    <property type="component" value="Chromosome"/>
</dbReference>
<dbReference type="GO" id="GO:0004359">
    <property type="term" value="F:glutaminase activity"/>
    <property type="evidence" value="ECO:0000318"/>
    <property type="project" value="GO_Central"/>
</dbReference>
<dbReference type="GO" id="GO:0006537">
    <property type="term" value="P:glutamate biosynthetic process"/>
    <property type="evidence" value="ECO:0000318"/>
    <property type="project" value="GO_Central"/>
</dbReference>
<dbReference type="GO" id="GO:0006543">
    <property type="term" value="P:glutamine catabolic process"/>
    <property type="evidence" value="ECO:0000318"/>
    <property type="project" value="GO_Central"/>
</dbReference>
<dbReference type="FunFam" id="3.40.710.10:FF:000005">
    <property type="entry name" value="Glutaminase"/>
    <property type="match status" value="1"/>
</dbReference>
<dbReference type="Gene3D" id="3.40.710.10">
    <property type="entry name" value="DD-peptidase/beta-lactamase superfamily"/>
    <property type="match status" value="1"/>
</dbReference>
<dbReference type="HAMAP" id="MF_00313">
    <property type="entry name" value="Glutaminase"/>
    <property type="match status" value="1"/>
</dbReference>
<dbReference type="InterPro" id="IPR012338">
    <property type="entry name" value="Beta-lactam/transpept-like"/>
</dbReference>
<dbReference type="InterPro" id="IPR015868">
    <property type="entry name" value="Glutaminase"/>
</dbReference>
<dbReference type="NCBIfam" id="TIGR03814">
    <property type="entry name" value="Gln_ase"/>
    <property type="match status" value="1"/>
</dbReference>
<dbReference type="NCBIfam" id="NF002132">
    <property type="entry name" value="PRK00971.1-1"/>
    <property type="match status" value="1"/>
</dbReference>
<dbReference type="NCBIfam" id="NF002133">
    <property type="entry name" value="PRK00971.1-2"/>
    <property type="match status" value="1"/>
</dbReference>
<dbReference type="PANTHER" id="PTHR12544">
    <property type="entry name" value="GLUTAMINASE"/>
    <property type="match status" value="1"/>
</dbReference>
<dbReference type="PANTHER" id="PTHR12544:SF29">
    <property type="entry name" value="GLUTAMINASE"/>
    <property type="match status" value="1"/>
</dbReference>
<dbReference type="Pfam" id="PF04960">
    <property type="entry name" value="Glutaminase"/>
    <property type="match status" value="1"/>
</dbReference>
<dbReference type="SUPFAM" id="SSF56601">
    <property type="entry name" value="beta-lactamase/transpeptidase-like"/>
    <property type="match status" value="1"/>
</dbReference>